<sequence>MPLIHRKKPTEKPSTPPSEEVVHDEDSQKKPHESSKSHHKKSNGGGKWSCIDSCCWFIGCVCVTWWFLLFLYNAMPASFPQYVTERITGPLPDPPGVKLKKEGLKAKHPVVFIPGIVTGGLELWEGKQCADGLFRKRLWGGTFGEVYKRPLCWVEHMSLDNETGLDPAGIRVRAVSGLVAADYFAPGYFVWAVLIANLAHIGYEEKNMYMAAYDWRLSFQNTEVRDQTLSRMKSNIELMVSTNGGKKAVIVPHSMGVLYFLHFMKWVEAPAPLGGGGGPDWCAKYIKAVMNIGGPFLGVPKAVAGLFSAEAKDVAVARAIAPGFLDTDIFRLQTLQHVMRMTRTWDSTMSMLPKGGDTIWGGLDWSPEKGHTCCGKKQKNNETCGEAGENGVSKKSPVNYGRMISFGKEVAEAAPSEINNIDFRGAVKGQSIPNHTCRDVWTEYHDMGIAGIKAIAEYKVYTAGEAIDLLHYVAPKMMARGAAHFSYGIADDLDDTKYQDPKYWSNPLETKLPNAPEMEIYSLYGVGIPTERAYVYKLNQSPDSCIPFQIFTSAHEEDEDSCLKAGVYNVDGDETVPVLSAGYMCAKAWRGKTRFNPSGIKTYIREYNHSPPANLLEGRGTQSGAHVDIMGNFALIEDIMRVAAGGNGSDIGHDQVHSGIFEWSERIDLKL</sequence>
<proteinExistence type="evidence at transcript level"/>
<accession>Q9FNA9</accession>
<accession>Q6YC80</accession>
<dbReference type="EC" id="2.3.1.158" evidence="2"/>
<dbReference type="EMBL" id="AY160110">
    <property type="protein sequence ID" value="AAO17787.1"/>
    <property type="status" value="ALT_SEQ"/>
    <property type="molecule type" value="mRNA"/>
</dbReference>
<dbReference type="EMBL" id="AB006704">
    <property type="protein sequence ID" value="BAB08690.1"/>
    <property type="molecule type" value="Genomic_DNA"/>
</dbReference>
<dbReference type="EMBL" id="CP002688">
    <property type="protein sequence ID" value="AED91921.1"/>
    <property type="molecule type" value="Genomic_DNA"/>
</dbReference>
<dbReference type="EMBL" id="AY052715">
    <property type="protein sequence ID" value="AAK96619.1"/>
    <property type="molecule type" value="mRNA"/>
</dbReference>
<dbReference type="RefSeq" id="NP_196868.1">
    <property type="nucleotide sequence ID" value="NM_121367.3"/>
</dbReference>
<dbReference type="FunCoup" id="Q9FNA9">
    <property type="interactions" value="906"/>
</dbReference>
<dbReference type="STRING" id="3702.Q9FNA9"/>
<dbReference type="ESTHER" id="arath-At5g13640">
    <property type="family name" value="PC-sterol_acyltransferase"/>
</dbReference>
<dbReference type="GlyCosmos" id="Q9FNA9">
    <property type="glycosylation" value="4 sites, No reported glycans"/>
</dbReference>
<dbReference type="GlyGen" id="Q9FNA9">
    <property type="glycosylation" value="4 sites"/>
</dbReference>
<dbReference type="iPTMnet" id="Q9FNA9"/>
<dbReference type="PaxDb" id="3702-AT5G13640.1"/>
<dbReference type="ProteomicsDB" id="236715"/>
<dbReference type="EnsemblPlants" id="AT5G13640.1">
    <property type="protein sequence ID" value="AT5G13640.1"/>
    <property type="gene ID" value="AT5G13640"/>
</dbReference>
<dbReference type="GeneID" id="831208"/>
<dbReference type="Gramene" id="AT5G13640.1">
    <property type="protein sequence ID" value="AT5G13640.1"/>
    <property type="gene ID" value="AT5G13640"/>
</dbReference>
<dbReference type="KEGG" id="ath:AT5G13640"/>
<dbReference type="Araport" id="AT5G13640"/>
<dbReference type="TAIR" id="AT5G13640">
    <property type="gene designation" value="PDAT"/>
</dbReference>
<dbReference type="eggNOG" id="KOG2369">
    <property type="taxonomic scope" value="Eukaryota"/>
</dbReference>
<dbReference type="HOGENOM" id="CLU_016065_1_0_1"/>
<dbReference type="InParanoid" id="Q9FNA9"/>
<dbReference type="PhylomeDB" id="Q9FNA9"/>
<dbReference type="BioCyc" id="ARA:AT5G13640-MONOMER"/>
<dbReference type="BioCyc" id="MetaCyc:AT5G13640-MONOMER"/>
<dbReference type="BRENDA" id="2.3.1.158">
    <property type="organism ID" value="399"/>
</dbReference>
<dbReference type="BRENDA" id="2.3.1.20">
    <property type="organism ID" value="399"/>
</dbReference>
<dbReference type="UniPathway" id="UPA00282"/>
<dbReference type="PRO" id="PR:Q9FNA9"/>
<dbReference type="Proteomes" id="UP000006548">
    <property type="component" value="Chromosome 5"/>
</dbReference>
<dbReference type="ExpressionAtlas" id="Q9FNA9">
    <property type="expression patterns" value="baseline and differential"/>
</dbReference>
<dbReference type="GO" id="GO:0005783">
    <property type="term" value="C:endoplasmic reticulum"/>
    <property type="evidence" value="ECO:0007005"/>
    <property type="project" value="TAIR"/>
</dbReference>
<dbReference type="GO" id="GO:0016020">
    <property type="term" value="C:membrane"/>
    <property type="evidence" value="ECO:0007669"/>
    <property type="project" value="UniProtKB-SubCell"/>
</dbReference>
<dbReference type="GO" id="GO:0000325">
    <property type="term" value="C:plant-type vacuole"/>
    <property type="evidence" value="ECO:0007005"/>
    <property type="project" value="TAIR"/>
</dbReference>
<dbReference type="GO" id="GO:0009536">
    <property type="term" value="C:plastid"/>
    <property type="evidence" value="ECO:0007005"/>
    <property type="project" value="TAIR"/>
</dbReference>
<dbReference type="GO" id="GO:0008374">
    <property type="term" value="F:O-acyltransferase activity"/>
    <property type="evidence" value="ECO:0007669"/>
    <property type="project" value="InterPro"/>
</dbReference>
<dbReference type="GO" id="GO:0046027">
    <property type="term" value="F:phospholipid:diacylglycerol acyltransferase activity"/>
    <property type="evidence" value="ECO:0000314"/>
    <property type="project" value="TAIR"/>
</dbReference>
<dbReference type="GO" id="GO:0006071">
    <property type="term" value="P:glycerol metabolic process"/>
    <property type="evidence" value="ECO:0007669"/>
    <property type="project" value="UniProtKB-KW"/>
</dbReference>
<dbReference type="GO" id="GO:0019432">
    <property type="term" value="P:triglyceride biosynthetic process"/>
    <property type="evidence" value="ECO:0000316"/>
    <property type="project" value="TAIR"/>
</dbReference>
<dbReference type="FunFam" id="3.40.50.1820:FF:000160">
    <property type="entry name" value="Phospholipid:diacylglycerol acyltransferase 1"/>
    <property type="match status" value="1"/>
</dbReference>
<dbReference type="Gene3D" id="3.40.50.1820">
    <property type="entry name" value="alpha/beta hydrolase"/>
    <property type="match status" value="1"/>
</dbReference>
<dbReference type="InterPro" id="IPR029058">
    <property type="entry name" value="AB_hydrolase_fold"/>
</dbReference>
<dbReference type="InterPro" id="IPR003386">
    <property type="entry name" value="LACT/PDAT_acylTrfase"/>
</dbReference>
<dbReference type="PANTHER" id="PTHR11440">
    <property type="entry name" value="LECITHIN-CHOLESTEROL ACYLTRANSFERASE-RELATED"/>
    <property type="match status" value="1"/>
</dbReference>
<dbReference type="Pfam" id="PF02450">
    <property type="entry name" value="LCAT"/>
    <property type="match status" value="2"/>
</dbReference>
<dbReference type="SUPFAM" id="SSF53474">
    <property type="entry name" value="alpha/beta-Hydrolases"/>
    <property type="match status" value="1"/>
</dbReference>
<evidence type="ECO:0000250" key="1"/>
<evidence type="ECO:0000250" key="2">
    <source>
        <dbReference type="UniProtKB" id="O94680"/>
    </source>
</evidence>
<evidence type="ECO:0000255" key="3"/>
<evidence type="ECO:0000256" key="4">
    <source>
        <dbReference type="SAM" id="MobiDB-lite"/>
    </source>
</evidence>
<evidence type="ECO:0000269" key="5">
    <source>
    </source>
</evidence>
<evidence type="ECO:0000269" key="6">
    <source>
    </source>
</evidence>
<evidence type="ECO:0000269" key="7">
    <source>
    </source>
</evidence>
<evidence type="ECO:0000269" key="8">
    <source>
    </source>
</evidence>
<evidence type="ECO:0000305" key="9"/>
<comment type="function">
    <text evidence="5 7 8">Triacylglycerol formation by an acyl-CoA independent pathway. The enzyme preferentially transfers acyl groups from the sn-2 position of a phospholipid to diacylglycerol, thus forming an sn-1-lysophospholipid. Involved in epoxy and hydroxy fatty acid accumulation in seeds. Has complementary functions with DAG1 that are essential for triacylglycerol synthesis and normal development of both seeds and pollen.</text>
</comment>
<comment type="catalytic activity">
    <reaction evidence="2">
        <text>a glycerophospholipid + a 1,2-diacyl-sn-glycerol = a monoacylglycerophospholipid + a triacyl-sn-glycerol</text>
        <dbReference type="Rhea" id="RHEA:14057"/>
        <dbReference type="ChEBI" id="CHEBI:17815"/>
        <dbReference type="ChEBI" id="CHEBI:64615"/>
        <dbReference type="ChEBI" id="CHEBI:136912"/>
        <dbReference type="ChEBI" id="CHEBI:136913"/>
        <dbReference type="EC" id="2.3.1.158"/>
    </reaction>
</comment>
<comment type="pathway">
    <text>Glycerolipid metabolism; triacylglycerol biosynthesis.</text>
</comment>
<comment type="subcellular location">
    <subcellularLocation>
        <location evidence="9">Membrane</location>
        <topology evidence="9">Single-pass membrane protein</topology>
    </subcellularLocation>
</comment>
<comment type="tissue specificity">
    <text evidence="5 7 8">Ubiquitous. Highest expression in young developing seeds.</text>
</comment>
<comment type="developmental stage">
    <text evidence="8">Peak of expression in seeds 9 days after flowering.</text>
</comment>
<comment type="disruption phenotype">
    <text evidence="6 7">No visible phenotype. No changes in the fatty acid content and composition of seeds. Dgat1 and pdat1 double mutants produce sterile deformed pollen.</text>
</comment>
<comment type="similarity">
    <text evidence="9">Belongs to the AB hydrolase superfamily. Lipase family.</text>
</comment>
<comment type="sequence caution" evidence="9">
    <conflict type="erroneous initiation">
        <sequence resource="EMBL-CDS" id="AAO17787"/>
    </conflict>
    <text>Truncated N-terminus.</text>
</comment>
<comment type="sequence caution" evidence="9">
    <conflict type="frameshift">
        <sequence resource="EMBL-CDS" id="AAO17787"/>
    </conflict>
</comment>
<reference key="1">
    <citation type="journal article" date="2004" name="Eur. J. Biochem.">
        <title>Expression in yeast of a novel phospholipase A1 cDNA from Arabidopsis thaliana.</title>
        <authorList>
            <person name="Noiriel A."/>
            <person name="Benveniste P."/>
            <person name="Banas A."/>
            <person name="Stymne S."/>
            <person name="Bouvier-Nave P."/>
        </authorList>
    </citation>
    <scope>NUCLEOTIDE SEQUENCE [MRNA]</scope>
</reference>
<reference key="2">
    <citation type="journal article" date="1997" name="DNA Res.">
        <title>Structural analysis of Arabidopsis thaliana chromosome 5. II. Sequence features of the regions of 1,044,062 bp covered by thirteen physically assigned P1 clones.</title>
        <authorList>
            <person name="Kotani H."/>
            <person name="Nakamura Y."/>
            <person name="Sato S."/>
            <person name="Kaneko T."/>
            <person name="Asamizu E."/>
            <person name="Miyajima N."/>
            <person name="Tabata S."/>
        </authorList>
    </citation>
    <scope>NUCLEOTIDE SEQUENCE [LARGE SCALE GENOMIC DNA]</scope>
    <source>
        <strain>cv. Columbia</strain>
    </source>
</reference>
<reference key="3">
    <citation type="journal article" date="2017" name="Plant J.">
        <title>Araport11: a complete reannotation of the Arabidopsis thaliana reference genome.</title>
        <authorList>
            <person name="Cheng C.Y."/>
            <person name="Krishnakumar V."/>
            <person name="Chan A.P."/>
            <person name="Thibaud-Nissen F."/>
            <person name="Schobel S."/>
            <person name="Town C.D."/>
        </authorList>
    </citation>
    <scope>GENOME REANNOTATION</scope>
    <source>
        <strain>cv. Columbia</strain>
    </source>
</reference>
<reference key="4">
    <citation type="journal article" date="2003" name="Science">
        <title>Empirical analysis of transcriptional activity in the Arabidopsis genome.</title>
        <authorList>
            <person name="Yamada K."/>
            <person name="Lim J."/>
            <person name="Dale J.M."/>
            <person name="Chen H."/>
            <person name="Shinn P."/>
            <person name="Palm C.J."/>
            <person name="Southwick A.M."/>
            <person name="Wu H.C."/>
            <person name="Kim C.J."/>
            <person name="Nguyen M."/>
            <person name="Pham P.K."/>
            <person name="Cheuk R.F."/>
            <person name="Karlin-Newmann G."/>
            <person name="Liu S.X."/>
            <person name="Lam B."/>
            <person name="Sakano H."/>
            <person name="Wu T."/>
            <person name="Yu G."/>
            <person name="Miranda M."/>
            <person name="Quach H.L."/>
            <person name="Tripp M."/>
            <person name="Chang C.H."/>
            <person name="Lee J.M."/>
            <person name="Toriumi M.J."/>
            <person name="Chan M.M."/>
            <person name="Tang C.C."/>
            <person name="Onodera C.S."/>
            <person name="Deng J.M."/>
            <person name="Akiyama K."/>
            <person name="Ansari Y."/>
            <person name="Arakawa T."/>
            <person name="Banh J."/>
            <person name="Banno F."/>
            <person name="Bowser L."/>
            <person name="Brooks S.Y."/>
            <person name="Carninci P."/>
            <person name="Chao Q."/>
            <person name="Choy N."/>
            <person name="Enju A."/>
            <person name="Goldsmith A.D."/>
            <person name="Gurjal M."/>
            <person name="Hansen N.F."/>
            <person name="Hayashizaki Y."/>
            <person name="Johnson-Hopson C."/>
            <person name="Hsuan V.W."/>
            <person name="Iida K."/>
            <person name="Karnes M."/>
            <person name="Khan S."/>
            <person name="Koesema E."/>
            <person name="Ishida J."/>
            <person name="Jiang P.X."/>
            <person name="Jones T."/>
            <person name="Kawai J."/>
            <person name="Kamiya A."/>
            <person name="Meyers C."/>
            <person name="Nakajima M."/>
            <person name="Narusaka M."/>
            <person name="Seki M."/>
            <person name="Sakurai T."/>
            <person name="Satou M."/>
            <person name="Tamse R."/>
            <person name="Vaysberg M."/>
            <person name="Wallender E.K."/>
            <person name="Wong C."/>
            <person name="Yamamura Y."/>
            <person name="Yuan S."/>
            <person name="Shinozaki K."/>
            <person name="Davis R.W."/>
            <person name="Theologis A."/>
            <person name="Ecker J.R."/>
        </authorList>
    </citation>
    <scope>NUCLEOTIDE SEQUENCE [LARGE SCALE MRNA]</scope>
    <source>
        <strain>cv. Columbia</strain>
    </source>
</reference>
<reference key="5">
    <citation type="journal article" date="2004" name="Plant Physiol.">
        <title>Cloning and functional characterization of a phospholipid:diacylglycerol acyltransferase from Arabidopsis.</title>
        <authorList>
            <person name="Stahl U."/>
            <person name="Carlsson A.S."/>
            <person name="Lenman M."/>
            <person name="Dahlqvist A."/>
            <person name="Huang B."/>
            <person name="Banas W."/>
            <person name="Banas A."/>
            <person name="Stymne S."/>
        </authorList>
    </citation>
    <scope>IDENTIFICATION</scope>
    <scope>FUNCTION</scope>
    <scope>TISSUE SPECIFICITY</scope>
</reference>
<reference key="6">
    <citation type="journal article" date="2005" name="Plant Physiol. Biochem.">
        <title>Isolation and characterization of an Arabidopsis thaliana knockout line for phospholipid: diacylglycerol transacylase gene (At5g13640).</title>
        <authorList>
            <person name="Mhaske V."/>
            <person name="Beldjilali K."/>
            <person name="Ohlrogge J."/>
            <person name="Pollard M."/>
        </authorList>
    </citation>
    <scope>DISRUPTION PHENOTYPE</scope>
</reference>
<reference key="7">
    <citation type="journal article" date="2009" name="Plant Cell">
        <title>DGAT1 and PDAT1 acyltransferases have overlapping functions in Arabidopsis triacylglycerol biosynthesis and are essential for normal pollen and seed development.</title>
        <authorList>
            <person name="Zhang M."/>
            <person name="Fan J."/>
            <person name="Taylor D.C."/>
            <person name="Ohlrogge J.B."/>
        </authorList>
    </citation>
    <scope>FUNCTION</scope>
    <scope>TISSUE SPECIFICITY</scope>
    <scope>DISRUPTION PHENOTYPE</scope>
</reference>
<reference key="8">
    <citation type="journal article" date="2010" name="Lipids">
        <title>DGAT1, DGAT2 and PDAT expression in seeds and other tissues of epoxy and hydroxy fatty acid accumulating plants.</title>
        <authorList>
            <person name="Li R."/>
            <person name="Yu K."/>
            <person name="Hildebrand D.F."/>
        </authorList>
    </citation>
    <scope>FUNCTION</scope>
    <scope>TISSUE SPECIFICITY</scope>
    <scope>DEVELOPMENTAL STAGE</scope>
</reference>
<protein>
    <recommendedName>
        <fullName>Phospholipid:diacylglycerol acyltransferase 1</fullName>
        <shortName>AtPDAT</shortName>
        <ecNumber evidence="2">2.3.1.158</ecNumber>
    </recommendedName>
</protein>
<name>PDAT1_ARATH</name>
<feature type="chain" id="PRO_0000398611" description="Phospholipid:diacylglycerol acyltransferase 1">
    <location>
        <begin position="1"/>
        <end position="671"/>
    </location>
</feature>
<feature type="topological domain" description="Cytoplasmic" evidence="3">
    <location>
        <begin position="1"/>
        <end position="54"/>
    </location>
</feature>
<feature type="transmembrane region" description="Helical" evidence="3">
    <location>
        <begin position="55"/>
        <end position="75"/>
    </location>
</feature>
<feature type="topological domain" description="Lumenal" evidence="3">
    <location>
        <begin position="76"/>
        <end position="671"/>
    </location>
</feature>
<feature type="region of interest" description="Disordered" evidence="4">
    <location>
        <begin position="1"/>
        <end position="46"/>
    </location>
</feature>
<feature type="compositionally biased region" description="Basic and acidic residues" evidence="4">
    <location>
        <begin position="20"/>
        <end position="36"/>
    </location>
</feature>
<feature type="active site" description="Acyl-ester intermediate" evidence="3">
    <location>
        <position position="254"/>
    </location>
</feature>
<feature type="active site" description="Charge relay system" evidence="1">
    <location>
        <position position="573"/>
    </location>
</feature>
<feature type="active site" description="Charge relay system" evidence="1">
    <location>
        <position position="626"/>
    </location>
</feature>
<feature type="glycosylation site" description="N-linked (GlcNAc...) asparagine" evidence="3">
    <location>
        <position position="161"/>
    </location>
</feature>
<feature type="glycosylation site" description="N-linked (GlcNAc...) asparagine" evidence="3">
    <location>
        <position position="381"/>
    </location>
</feature>
<feature type="glycosylation site" description="N-linked (GlcNAc...) asparagine" evidence="3">
    <location>
        <position position="434"/>
    </location>
</feature>
<feature type="glycosylation site" description="N-linked (GlcNAc...) asparagine" evidence="3">
    <location>
        <position position="647"/>
    </location>
</feature>
<feature type="sequence conflict" description="In Ref. 2; AAO17787." evidence="9" ref="2">
    <original>Q</original>
    <variation>H</variation>
    <location>
        <position position="378"/>
    </location>
</feature>
<keyword id="KW-0012">Acyltransferase</keyword>
<keyword id="KW-0319">Glycerol metabolism</keyword>
<keyword id="KW-0325">Glycoprotein</keyword>
<keyword id="KW-0444">Lipid biosynthesis</keyword>
<keyword id="KW-0443">Lipid metabolism</keyword>
<keyword id="KW-0472">Membrane</keyword>
<keyword id="KW-1185">Reference proteome</keyword>
<keyword id="KW-0808">Transferase</keyword>
<keyword id="KW-0812">Transmembrane</keyword>
<keyword id="KW-1133">Transmembrane helix</keyword>
<organism>
    <name type="scientific">Arabidopsis thaliana</name>
    <name type="common">Mouse-ear cress</name>
    <dbReference type="NCBI Taxonomy" id="3702"/>
    <lineage>
        <taxon>Eukaryota</taxon>
        <taxon>Viridiplantae</taxon>
        <taxon>Streptophyta</taxon>
        <taxon>Embryophyta</taxon>
        <taxon>Tracheophyta</taxon>
        <taxon>Spermatophyta</taxon>
        <taxon>Magnoliopsida</taxon>
        <taxon>eudicotyledons</taxon>
        <taxon>Gunneridae</taxon>
        <taxon>Pentapetalae</taxon>
        <taxon>rosids</taxon>
        <taxon>malvids</taxon>
        <taxon>Brassicales</taxon>
        <taxon>Brassicaceae</taxon>
        <taxon>Camelineae</taxon>
        <taxon>Arabidopsis</taxon>
    </lineage>
</organism>
<gene>
    <name type="primary">PDAT1</name>
    <name type="synonym">PDAT</name>
    <name type="ordered locus">At5g13640</name>
    <name type="ORF">MSH12.10</name>
    <name type="ORF">T6I14.2</name>
</gene>